<dbReference type="EMBL" id="X13967">
    <property type="protein sequence ID" value="CAA32147.1"/>
    <property type="molecule type" value="mRNA"/>
</dbReference>
<dbReference type="EMBL" id="M27053">
    <property type="protein sequence ID" value="AAA53188.1"/>
    <property type="molecule type" value="Genomic_DNA"/>
</dbReference>
<dbReference type="EMBL" id="M27052">
    <property type="protein sequence ID" value="AAA53188.1"/>
    <property type="status" value="JOINED"/>
    <property type="molecule type" value="Genomic_DNA"/>
</dbReference>
<dbReference type="EMBL" id="AC004264">
    <property type="protein sequence ID" value="AAC05174.1"/>
    <property type="molecule type" value="Genomic_DNA"/>
</dbReference>
<dbReference type="EMBL" id="M63420">
    <property type="protein sequence ID" value="AAA51699.1"/>
    <property type="molecule type" value="Genomic_DNA"/>
</dbReference>
<dbReference type="EMBL" id="CN409468">
    <property type="status" value="NOT_ANNOTATED_CDS"/>
    <property type="molecule type" value="mRNA"/>
</dbReference>
<dbReference type="EMBL" id="AK315310">
    <property type="protein sequence ID" value="BAG37714.1"/>
    <property type="molecule type" value="mRNA"/>
</dbReference>
<dbReference type="EMBL" id="CH471095">
    <property type="protein sequence ID" value="EAW59863.1"/>
    <property type="molecule type" value="Genomic_DNA"/>
</dbReference>
<dbReference type="EMBL" id="BC069540">
    <property type="protein sequence ID" value="AAH69540.1"/>
    <property type="molecule type" value="mRNA"/>
</dbReference>
<dbReference type="EMBL" id="BC093733">
    <property type="protein sequence ID" value="AAH93733.1"/>
    <property type="molecule type" value="mRNA"/>
</dbReference>
<dbReference type="EMBL" id="BC093735">
    <property type="protein sequence ID" value="AAH93735.1"/>
    <property type="molecule type" value="mRNA"/>
</dbReference>
<dbReference type="EMBL" id="J03261">
    <property type="protein sequence ID" value="AAA59517.1"/>
    <property type="molecule type" value="Genomic_DNA"/>
</dbReference>
<dbReference type="CCDS" id="CCDS13872.1">
    <molecule id="P15018-1"/>
</dbReference>
<dbReference type="CCDS" id="CCDS58799.1">
    <molecule id="P15018-2"/>
</dbReference>
<dbReference type="PIR" id="B36282">
    <property type="entry name" value="B36282"/>
</dbReference>
<dbReference type="RefSeq" id="NP_001244064.1">
    <molecule id="P15018-2"/>
    <property type="nucleotide sequence ID" value="NM_001257135.2"/>
</dbReference>
<dbReference type="RefSeq" id="NP_002300.1">
    <molecule id="P15018-1"/>
    <property type="nucleotide sequence ID" value="NM_002309.5"/>
</dbReference>
<dbReference type="PDB" id="1EMR">
    <property type="method" value="X-ray"/>
    <property type="resolution" value="3.50 A"/>
    <property type="chains" value="A=44-202"/>
</dbReference>
<dbReference type="PDB" id="1PVH">
    <property type="method" value="X-ray"/>
    <property type="resolution" value="2.50 A"/>
    <property type="chains" value="B/D=34-202"/>
</dbReference>
<dbReference type="PDB" id="2Q7N">
    <property type="method" value="X-ray"/>
    <property type="resolution" value="4.00 A"/>
    <property type="chains" value="B/D=23-202"/>
</dbReference>
<dbReference type="PDB" id="7N0A">
    <property type="method" value="X-ray"/>
    <property type="resolution" value="3.10 A"/>
    <property type="chains" value="C=23-202"/>
</dbReference>
<dbReference type="PDB" id="8D6A">
    <property type="method" value="EM"/>
    <property type="resolution" value="3.54 A"/>
    <property type="chains" value="D=24-202"/>
</dbReference>
<dbReference type="PDBsum" id="1EMR"/>
<dbReference type="PDBsum" id="1PVH"/>
<dbReference type="PDBsum" id="2Q7N"/>
<dbReference type="PDBsum" id="7N0A"/>
<dbReference type="PDBsum" id="8D6A"/>
<dbReference type="EMDB" id="EMD-27221"/>
<dbReference type="SMR" id="P15018"/>
<dbReference type="BioGRID" id="110164">
    <property type="interactions" value="8"/>
</dbReference>
<dbReference type="CORUM" id="P15018"/>
<dbReference type="DIP" id="DIP-5769N"/>
<dbReference type="FunCoup" id="P15018">
    <property type="interactions" value="512"/>
</dbReference>
<dbReference type="IntAct" id="P15018">
    <property type="interactions" value="8"/>
</dbReference>
<dbReference type="MINT" id="P15018"/>
<dbReference type="STRING" id="9606.ENSP00000249075"/>
<dbReference type="GlyCosmos" id="P15018">
    <property type="glycosylation" value="6 sites, No reported glycans"/>
</dbReference>
<dbReference type="GlyGen" id="P15018">
    <property type="glycosylation" value="7 sites, 1 N-linked glycan (1 site)"/>
</dbReference>
<dbReference type="iPTMnet" id="P15018"/>
<dbReference type="BioMuta" id="LIF"/>
<dbReference type="DMDM" id="126279"/>
<dbReference type="jPOST" id="P15018"/>
<dbReference type="MassIVE" id="P15018"/>
<dbReference type="PaxDb" id="9606-ENSP00000249075"/>
<dbReference type="PeptideAtlas" id="P15018"/>
<dbReference type="ProteomicsDB" id="53100">
    <molecule id="P15018-1"/>
</dbReference>
<dbReference type="Antibodypedia" id="10647">
    <property type="antibodies" value="598 antibodies from 44 providers"/>
</dbReference>
<dbReference type="DNASU" id="3976"/>
<dbReference type="Ensembl" id="ENST00000249075.4">
    <molecule id="P15018-1"/>
    <property type="protein sequence ID" value="ENSP00000249075.3"/>
    <property type="gene ID" value="ENSG00000128342.5"/>
</dbReference>
<dbReference type="Ensembl" id="ENST00000403987.3">
    <molecule id="P15018-2"/>
    <property type="protein sequence ID" value="ENSP00000384450.3"/>
    <property type="gene ID" value="ENSG00000128342.5"/>
</dbReference>
<dbReference type="GeneID" id="3976"/>
<dbReference type="KEGG" id="hsa:3976"/>
<dbReference type="MANE-Select" id="ENST00000249075.4">
    <property type="protein sequence ID" value="ENSP00000249075.3"/>
    <property type="RefSeq nucleotide sequence ID" value="NM_002309.5"/>
    <property type="RefSeq protein sequence ID" value="NP_002300.1"/>
</dbReference>
<dbReference type="UCSC" id="uc003agz.3">
    <molecule id="P15018-1"/>
    <property type="organism name" value="human"/>
</dbReference>
<dbReference type="AGR" id="HGNC:6596"/>
<dbReference type="CTD" id="3976"/>
<dbReference type="DisGeNET" id="3976"/>
<dbReference type="GeneCards" id="LIF"/>
<dbReference type="HGNC" id="HGNC:6596">
    <property type="gene designation" value="LIF"/>
</dbReference>
<dbReference type="HPA" id="ENSG00000128342">
    <property type="expression patterns" value="Tissue enhanced (gallbladder, urinary bladder)"/>
</dbReference>
<dbReference type="MIM" id="159540">
    <property type="type" value="gene"/>
</dbReference>
<dbReference type="neXtProt" id="NX_P15018"/>
<dbReference type="OpenTargets" id="ENSG00000128342"/>
<dbReference type="PharmGKB" id="PA30370"/>
<dbReference type="VEuPathDB" id="HostDB:ENSG00000128342"/>
<dbReference type="eggNOG" id="ENOG502S3JD">
    <property type="taxonomic scope" value="Eukaryota"/>
</dbReference>
<dbReference type="GeneTree" id="ENSGT00390000000059"/>
<dbReference type="HOGENOM" id="CLU_117011_0_0_1"/>
<dbReference type="InParanoid" id="P15018"/>
<dbReference type="OMA" id="CHDVRPC"/>
<dbReference type="OrthoDB" id="9902088at2759"/>
<dbReference type="PAN-GO" id="P15018">
    <property type="GO annotations" value="7 GO annotations based on evolutionary models"/>
</dbReference>
<dbReference type="PhylomeDB" id="P15018"/>
<dbReference type="TreeFam" id="TF336245"/>
<dbReference type="PathwayCommons" id="P15018"/>
<dbReference type="Reactome" id="R-HSA-6783783">
    <property type="pathway name" value="Interleukin-10 signaling"/>
</dbReference>
<dbReference type="Reactome" id="R-HSA-6785807">
    <property type="pathway name" value="Interleukin-4 and Interleukin-13 signaling"/>
</dbReference>
<dbReference type="Reactome" id="R-HSA-6788467">
    <property type="pathway name" value="IL-6-type cytokine receptor ligand interactions"/>
</dbReference>
<dbReference type="SignaLink" id="P15018"/>
<dbReference type="SIGNOR" id="P15018"/>
<dbReference type="BioGRID-ORCS" id="3976">
    <property type="hits" value="18 hits in 1147 CRISPR screens"/>
</dbReference>
<dbReference type="EvolutionaryTrace" id="P15018"/>
<dbReference type="GeneWiki" id="Leukemia_inhibitory_factor"/>
<dbReference type="GenomeRNAi" id="3976"/>
<dbReference type="Pharos" id="P15018">
    <property type="development level" value="Tbio"/>
</dbReference>
<dbReference type="PRO" id="PR:P15018"/>
<dbReference type="Proteomes" id="UP000005640">
    <property type="component" value="Chromosome 22"/>
</dbReference>
<dbReference type="RNAct" id="P15018">
    <property type="molecule type" value="protein"/>
</dbReference>
<dbReference type="Bgee" id="ENSG00000128342">
    <property type="expression patterns" value="Expressed in cartilage tissue and 131 other cell types or tissues"/>
</dbReference>
<dbReference type="GO" id="GO:0005829">
    <property type="term" value="C:cytosol"/>
    <property type="evidence" value="ECO:0000314"/>
    <property type="project" value="HPA"/>
</dbReference>
<dbReference type="GO" id="GO:0005576">
    <property type="term" value="C:extracellular region"/>
    <property type="evidence" value="ECO:0000304"/>
    <property type="project" value="Reactome"/>
</dbReference>
<dbReference type="GO" id="GO:0005615">
    <property type="term" value="C:extracellular space"/>
    <property type="evidence" value="ECO:0000318"/>
    <property type="project" value="GO_Central"/>
</dbReference>
<dbReference type="GO" id="GO:0005125">
    <property type="term" value="F:cytokine activity"/>
    <property type="evidence" value="ECO:0000314"/>
    <property type="project" value="BHF-UCL"/>
</dbReference>
<dbReference type="GO" id="GO:0008083">
    <property type="term" value="F:growth factor activity"/>
    <property type="evidence" value="ECO:0000314"/>
    <property type="project" value="BHF-UCL"/>
</dbReference>
<dbReference type="GO" id="GO:0005146">
    <property type="term" value="F:leukemia inhibitory factor receptor binding"/>
    <property type="evidence" value="ECO:0000314"/>
    <property type="project" value="MGI"/>
</dbReference>
<dbReference type="GO" id="GO:0005102">
    <property type="term" value="F:signaling receptor binding"/>
    <property type="evidence" value="ECO:0000353"/>
    <property type="project" value="BHF-UCL"/>
</dbReference>
<dbReference type="GO" id="GO:0001974">
    <property type="term" value="P:blood vessel remodeling"/>
    <property type="evidence" value="ECO:0007669"/>
    <property type="project" value="Ensembl"/>
</dbReference>
<dbReference type="GO" id="GO:0000902">
    <property type="term" value="P:cell morphogenesis"/>
    <property type="evidence" value="ECO:0007669"/>
    <property type="project" value="Ensembl"/>
</dbReference>
<dbReference type="GO" id="GO:0097696">
    <property type="term" value="P:cell surface receptor signaling pathway via STAT"/>
    <property type="evidence" value="ECO:0000314"/>
    <property type="project" value="BHF-UCL"/>
</dbReference>
<dbReference type="GO" id="GO:0046697">
    <property type="term" value="P:decidualization"/>
    <property type="evidence" value="ECO:0007669"/>
    <property type="project" value="Ensembl"/>
</dbReference>
<dbReference type="GO" id="GO:0007566">
    <property type="term" value="P:embryo implantation"/>
    <property type="evidence" value="ECO:0007669"/>
    <property type="project" value="Ensembl"/>
</dbReference>
<dbReference type="GO" id="GO:0048144">
    <property type="term" value="P:fibroblast proliferation"/>
    <property type="evidence" value="ECO:0007669"/>
    <property type="project" value="Ensembl"/>
</dbReference>
<dbReference type="GO" id="GO:0010467">
    <property type="term" value="P:gene expression"/>
    <property type="evidence" value="ECO:0007669"/>
    <property type="project" value="Ensembl"/>
</dbReference>
<dbReference type="GO" id="GO:0006955">
    <property type="term" value="P:immune response"/>
    <property type="evidence" value="ECO:0007669"/>
    <property type="project" value="InterPro"/>
</dbReference>
<dbReference type="GO" id="GO:0048861">
    <property type="term" value="P:leukemia inhibitory factor signaling pathway"/>
    <property type="evidence" value="ECO:0000314"/>
    <property type="project" value="BHF-UCL"/>
</dbReference>
<dbReference type="GO" id="GO:0048286">
    <property type="term" value="P:lung alveolus development"/>
    <property type="evidence" value="ECO:0007669"/>
    <property type="project" value="Ensembl"/>
</dbReference>
<dbReference type="GO" id="GO:0060463">
    <property type="term" value="P:lung lobe morphogenesis"/>
    <property type="evidence" value="ECO:0007669"/>
    <property type="project" value="Ensembl"/>
</dbReference>
<dbReference type="GO" id="GO:0060426">
    <property type="term" value="P:lung vasculature development"/>
    <property type="evidence" value="ECO:0007669"/>
    <property type="project" value="Ensembl"/>
</dbReference>
<dbReference type="GO" id="GO:0030225">
    <property type="term" value="P:macrophage differentiation"/>
    <property type="evidence" value="ECO:0000304"/>
    <property type="project" value="ProtInc"/>
</dbReference>
<dbReference type="GO" id="GO:0140013">
    <property type="term" value="P:meiotic nuclear division"/>
    <property type="evidence" value="ECO:0007669"/>
    <property type="project" value="Ensembl"/>
</dbReference>
<dbReference type="GO" id="GO:0048644">
    <property type="term" value="P:muscle organ morphogenesis"/>
    <property type="evidence" value="ECO:0007669"/>
    <property type="project" value="Ensembl"/>
</dbReference>
<dbReference type="GO" id="GO:0008285">
    <property type="term" value="P:negative regulation of cell population proliferation"/>
    <property type="evidence" value="ECO:0007669"/>
    <property type="project" value="Ensembl"/>
</dbReference>
<dbReference type="GO" id="GO:0070373">
    <property type="term" value="P:negative regulation of ERK1 and ERK2 cascade"/>
    <property type="evidence" value="ECO:0007669"/>
    <property type="project" value="Ensembl"/>
</dbReference>
<dbReference type="GO" id="GO:0046888">
    <property type="term" value="P:negative regulation of hormone secretion"/>
    <property type="evidence" value="ECO:0000314"/>
    <property type="project" value="MGI"/>
</dbReference>
<dbReference type="GO" id="GO:0045835">
    <property type="term" value="P:negative regulation of meiotic nuclear division"/>
    <property type="evidence" value="ECO:0007669"/>
    <property type="project" value="Ensembl"/>
</dbReference>
<dbReference type="GO" id="GO:0048666">
    <property type="term" value="P:neuron development"/>
    <property type="evidence" value="ECO:0007669"/>
    <property type="project" value="Ensembl"/>
</dbReference>
<dbReference type="GO" id="GO:0048711">
    <property type="term" value="P:positive regulation of astrocyte differentiation"/>
    <property type="evidence" value="ECO:0007669"/>
    <property type="project" value="Ensembl"/>
</dbReference>
<dbReference type="GO" id="GO:0033630">
    <property type="term" value="P:positive regulation of cell adhesion mediated by integrin"/>
    <property type="evidence" value="ECO:0000315"/>
    <property type="project" value="CACAO"/>
</dbReference>
<dbReference type="GO" id="GO:0008284">
    <property type="term" value="P:positive regulation of cell population proliferation"/>
    <property type="evidence" value="ECO:0000314"/>
    <property type="project" value="MGI"/>
</dbReference>
<dbReference type="GO" id="GO:0048146">
    <property type="term" value="P:positive regulation of fibroblast proliferation"/>
    <property type="evidence" value="ECO:0007669"/>
    <property type="project" value="Ensembl"/>
</dbReference>
<dbReference type="GO" id="GO:0010628">
    <property type="term" value="P:positive regulation of gene expression"/>
    <property type="evidence" value="ECO:0007669"/>
    <property type="project" value="Ensembl"/>
</dbReference>
<dbReference type="GO" id="GO:0045651">
    <property type="term" value="P:positive regulation of macrophage differentiation"/>
    <property type="evidence" value="ECO:0000314"/>
    <property type="project" value="MGI"/>
</dbReference>
<dbReference type="GO" id="GO:0043410">
    <property type="term" value="P:positive regulation of MAPK cascade"/>
    <property type="evidence" value="ECO:0000314"/>
    <property type="project" value="MGI"/>
</dbReference>
<dbReference type="GO" id="GO:0072108">
    <property type="term" value="P:positive regulation of mesenchymal to epithelial transition involved in metanephros morphogenesis"/>
    <property type="evidence" value="ECO:0000314"/>
    <property type="project" value="BHF-UCL"/>
</dbReference>
<dbReference type="GO" id="GO:0033138">
    <property type="term" value="P:positive regulation of peptidyl-serine phosphorylation"/>
    <property type="evidence" value="ECO:0000314"/>
    <property type="project" value="MGI"/>
</dbReference>
<dbReference type="GO" id="GO:0050731">
    <property type="term" value="P:positive regulation of peptidyl-tyrosine phosphorylation"/>
    <property type="evidence" value="ECO:0000314"/>
    <property type="project" value="MGI"/>
</dbReference>
<dbReference type="GO" id="GO:1904894">
    <property type="term" value="P:positive regulation of receptor signaling pathway via STAT"/>
    <property type="evidence" value="ECO:0000314"/>
    <property type="project" value="BHF-UCL"/>
</dbReference>
<dbReference type="GO" id="GO:0045944">
    <property type="term" value="P:positive regulation of transcription by RNA polymerase II"/>
    <property type="evidence" value="ECO:0000314"/>
    <property type="project" value="BHF-UCL"/>
</dbReference>
<dbReference type="GO" id="GO:0045595">
    <property type="term" value="P:regulation of cell differentiation"/>
    <property type="evidence" value="ECO:0000318"/>
    <property type="project" value="GO_Central"/>
</dbReference>
<dbReference type="GO" id="GO:0072307">
    <property type="term" value="P:regulation of metanephric nephron tubule epithelial cell differentiation"/>
    <property type="evidence" value="ECO:0000314"/>
    <property type="project" value="BHF-UCL"/>
</dbReference>
<dbReference type="GO" id="GO:0001666">
    <property type="term" value="P:response to hypoxia"/>
    <property type="evidence" value="ECO:0007669"/>
    <property type="project" value="Ensembl"/>
</dbReference>
<dbReference type="GO" id="GO:0035019">
    <property type="term" value="P:somatic stem cell population maintenance"/>
    <property type="evidence" value="ECO:0007669"/>
    <property type="project" value="Ensembl"/>
</dbReference>
<dbReference type="GO" id="GO:0048863">
    <property type="term" value="P:stem cell differentiation"/>
    <property type="evidence" value="ECO:0007669"/>
    <property type="project" value="Ensembl"/>
</dbReference>
<dbReference type="GO" id="GO:0060707">
    <property type="term" value="P:trophoblast giant cell differentiation"/>
    <property type="evidence" value="ECO:0007669"/>
    <property type="project" value="Ensembl"/>
</dbReference>
<dbReference type="FunFam" id="1.20.1250.10:FF:000018">
    <property type="entry name" value="leukemia inhibitory factor"/>
    <property type="match status" value="1"/>
</dbReference>
<dbReference type="Gene3D" id="1.20.1250.10">
    <property type="match status" value="1"/>
</dbReference>
<dbReference type="InterPro" id="IPR009079">
    <property type="entry name" value="4_helix_cytokine-like_core"/>
</dbReference>
<dbReference type="InterPro" id="IPR003624">
    <property type="entry name" value="Leukemia_IF"/>
</dbReference>
<dbReference type="InterPro" id="IPR001581">
    <property type="entry name" value="Leukemia_IF/oncostatin"/>
</dbReference>
<dbReference type="InterPro" id="IPR019827">
    <property type="entry name" value="Leukemia_IF/oncostatin_CS"/>
</dbReference>
<dbReference type="PANTHER" id="PTHR10633">
    <property type="entry name" value="LEUKEMIA INHIBITORY FACTOR"/>
    <property type="match status" value="1"/>
</dbReference>
<dbReference type="PANTHER" id="PTHR10633:SF0">
    <property type="entry name" value="LEUKEMIA INHIBITORY FACTOR"/>
    <property type="match status" value="1"/>
</dbReference>
<dbReference type="Pfam" id="PF01291">
    <property type="entry name" value="LIF_OSM"/>
    <property type="match status" value="1"/>
</dbReference>
<dbReference type="PRINTS" id="PR01883">
    <property type="entry name" value="LEUKAEMIAIF"/>
</dbReference>
<dbReference type="SMART" id="SM00080">
    <property type="entry name" value="LIF_OSM"/>
    <property type="match status" value="1"/>
</dbReference>
<dbReference type="SUPFAM" id="SSF47266">
    <property type="entry name" value="4-helical cytokines"/>
    <property type="match status" value="1"/>
</dbReference>
<dbReference type="PROSITE" id="PS00590">
    <property type="entry name" value="LIF_OSM"/>
    <property type="match status" value="1"/>
</dbReference>
<keyword id="KW-0002">3D-structure</keyword>
<keyword id="KW-0025">Alternative splicing</keyword>
<keyword id="KW-0202">Cytokine</keyword>
<keyword id="KW-0903">Direct protein sequencing</keyword>
<keyword id="KW-1015">Disulfide bond</keyword>
<keyword id="KW-0325">Glycoprotein</keyword>
<keyword id="KW-0339">Growth factor</keyword>
<keyword id="KW-0582">Pharmaceutical</keyword>
<keyword id="KW-1267">Proteomics identification</keyword>
<keyword id="KW-1185">Reference proteome</keyword>
<keyword id="KW-0964">Secreted</keyword>
<keyword id="KW-0732">Signal</keyword>
<gene>
    <name type="primary">LIF</name>
    <name type="synonym">HILDA</name>
</gene>
<evidence type="ECO:0000269" key="1">
    <source>
    </source>
</evidence>
<evidence type="ECO:0000269" key="2">
    <source>
    </source>
</evidence>
<evidence type="ECO:0000303" key="3">
    <source>
    </source>
</evidence>
<evidence type="ECO:0000305" key="4"/>
<evidence type="ECO:0007829" key="5">
    <source>
        <dbReference type="PDB" id="1EMR"/>
    </source>
</evidence>
<evidence type="ECO:0007829" key="6">
    <source>
        <dbReference type="PDB" id="1PVH"/>
    </source>
</evidence>
<evidence type="ECO:0007829" key="7">
    <source>
        <dbReference type="PDB" id="7N0A"/>
    </source>
</evidence>
<sequence>MKVLAAGVVPLLLVLHWKHGAGSPLPITPVNATCAIRHPCHNNLMNQIRSQLAQLNGSANALFILYYTAQGEPFPNNLDKLCGPNVTDFPPFHANGTEKAKLVELYRIVVYLGTSLGNITRDQKILNPSALSLHSKLNATADILRGLLSNVLCRLCSKYHVGHVDVTYGPDTSGKDVFQKKKLGCQLLGKYKQIIAVLAQAF</sequence>
<proteinExistence type="evidence at protein level"/>
<comment type="function">
    <text>LIF has the capacity to induce terminal differentiation in leukemic cells. Its activities include the induction of hematopoietic differentiation in normal and myeloid leukemia cells, the induction of neuronal cell differentiation, and the stimulation of acute-phase protein synthesis in hepatocytes.</text>
</comment>
<comment type="interaction">
    <interactant intactId="EBI-1037189">
        <id>P15018</id>
    </interactant>
    <interactant intactId="EBI-10187349">
        <id>O60760</id>
        <label>HPGDS</label>
    </interactant>
    <organismsDiffer>false</organismsDiffer>
    <experiments>3</experiments>
</comment>
<comment type="interaction">
    <interactant intactId="EBI-1037189">
        <id>P15018</id>
    </interactant>
    <interactant intactId="EBI-1030834">
        <id>P40189</id>
        <label>IL6ST</label>
    </interactant>
    <organismsDiffer>false</organismsDiffer>
    <experiments>2</experiments>
</comment>
<comment type="interaction">
    <interactant intactId="EBI-1037189">
        <id>P15018</id>
    </interactant>
    <interactant intactId="EBI-948001">
        <id>Q15323</id>
        <label>KRT31</label>
    </interactant>
    <organismsDiffer>false</organismsDiffer>
    <experiments>3</experiments>
</comment>
<comment type="interaction">
    <interactant intactId="EBI-1037189">
        <id>P15018</id>
    </interactant>
    <interactant intactId="EBI-11953334">
        <id>P60328</id>
        <label>KRTAP12-3</label>
    </interactant>
    <organismsDiffer>false</organismsDiffer>
    <experiments>3</experiments>
</comment>
<comment type="interaction">
    <interactant intactId="EBI-1037189">
        <id>P15018</id>
    </interactant>
    <interactant intactId="EBI-749635">
        <id>P61601</id>
        <label>NCALD</label>
    </interactant>
    <organismsDiffer>false</organismsDiffer>
    <experiments>3</experiments>
</comment>
<comment type="subcellular location">
    <subcellularLocation>
        <location>Secreted</location>
    </subcellularLocation>
</comment>
<comment type="alternative products">
    <event type="alternative splicing"/>
    <isoform>
        <id>P15018-1</id>
        <name>1</name>
        <sequence type="displayed"/>
    </isoform>
    <isoform>
        <id>P15018-2</id>
        <name>2</name>
        <sequence type="described" ref="VSP_045551 VSP_045552"/>
    </isoform>
</comment>
<comment type="pharmaceutical">
    <text>In phase II clinical trial. The drug is being developed by Amrad to assist embryo implantation in women who have failed to become pregnant despite assisted reproductive technologies (ART).</text>
</comment>
<comment type="similarity">
    <text evidence="4">Belongs to the LIF/OSM family.</text>
</comment>
<comment type="online information" name="Wikipedia">
    <link uri="https://en.wikipedia.org/wiki/Leukemia_inhibitory_factor"/>
    <text>Leukemia inhibitory factor entry</text>
</comment>
<name>LIF_HUMAN</name>
<reference key="1">
    <citation type="journal article" date="1988" name="Nature">
        <title>Leukaemia inhibitory factor is identical to the myeloid growth factor human interleukin for DA cells.</title>
        <authorList>
            <person name="Moreau J.-F."/>
            <person name="Donaldson D.D."/>
            <person name="Bennett F."/>
            <person name="Witek-Giannotti J."/>
            <person name="Clark S.C."/>
            <person name="Wong G.G."/>
        </authorList>
    </citation>
    <scope>NUCLEOTIDE SEQUENCE [MRNA] (ISOFORM 1)</scope>
</reference>
<reference key="2">
    <citation type="journal article" date="1989" name="DNA">
        <title>Genomic cloning and heterologous expression of human differentiation-stimulating factor.</title>
        <authorList>
            <person name="Lowe D.G."/>
            <person name="Nunes W."/>
            <person name="Bombara M."/>
            <person name="McCabe S."/>
            <person name="Ranges G.E."/>
            <person name="Henzel W."/>
            <person name="Tomida M."/>
            <person name="Yamamoto-Yamaguchi Y."/>
            <person name="Hozumi M."/>
            <person name="Goeddel D.V."/>
        </authorList>
    </citation>
    <scope>NUCLEOTIDE SEQUENCE [GENOMIC DNA]</scope>
</reference>
<reference key="3">
    <citation type="journal article" date="2004" name="Nat. Biotechnol.">
        <title>Transcriptome characterization elucidates signaling networks that control human ES cell growth and differentiation.</title>
        <authorList>
            <person name="Brandenberger R."/>
            <person name="Wei H."/>
            <person name="Zhang S."/>
            <person name="Lei S."/>
            <person name="Murage J."/>
            <person name="Fisk G.J."/>
            <person name="Li Y."/>
            <person name="Xu C."/>
            <person name="Fang R."/>
            <person name="Guegler K."/>
            <person name="Rao M.S."/>
            <person name="Mandalam R."/>
            <person name="Lebkowski J."/>
            <person name="Stanton L.W."/>
        </authorList>
    </citation>
    <scope>NUCLEOTIDE SEQUENCE [LARGE SCALE MRNA] (ISOFORM 2)</scope>
    <source>
        <tissue>Embryonic stem cell</tissue>
    </source>
</reference>
<reference key="4">
    <citation type="journal article" date="1990" name="J. Biol. Chem.">
        <title>Structural organization of the genes for murine and human leukemia inhibitory factor. Evolutionary conservation of coding and non-coding regions.</title>
        <authorList>
            <person name="Stahl J."/>
            <person name="Gearing D.P."/>
            <person name="Willson T.A."/>
            <person name="Brown M.A."/>
            <person name="King J.A."/>
            <person name="Gough N.M."/>
        </authorList>
    </citation>
    <scope>NUCLEOTIDE SEQUENCE [GENOMIC DNA]</scope>
</reference>
<reference key="5">
    <citation type="journal article" date="2004" name="Nat. Genet.">
        <title>Complete sequencing and characterization of 21,243 full-length human cDNAs.</title>
        <authorList>
            <person name="Ota T."/>
            <person name="Suzuki Y."/>
            <person name="Nishikawa T."/>
            <person name="Otsuki T."/>
            <person name="Sugiyama T."/>
            <person name="Irie R."/>
            <person name="Wakamatsu A."/>
            <person name="Hayashi K."/>
            <person name="Sato H."/>
            <person name="Nagai K."/>
            <person name="Kimura K."/>
            <person name="Makita H."/>
            <person name="Sekine M."/>
            <person name="Obayashi M."/>
            <person name="Nishi T."/>
            <person name="Shibahara T."/>
            <person name="Tanaka T."/>
            <person name="Ishii S."/>
            <person name="Yamamoto J."/>
            <person name="Saito K."/>
            <person name="Kawai Y."/>
            <person name="Isono Y."/>
            <person name="Nakamura Y."/>
            <person name="Nagahari K."/>
            <person name="Murakami K."/>
            <person name="Yasuda T."/>
            <person name="Iwayanagi T."/>
            <person name="Wagatsuma M."/>
            <person name="Shiratori A."/>
            <person name="Sudo H."/>
            <person name="Hosoiri T."/>
            <person name="Kaku Y."/>
            <person name="Kodaira H."/>
            <person name="Kondo H."/>
            <person name="Sugawara M."/>
            <person name="Takahashi M."/>
            <person name="Kanda K."/>
            <person name="Yokoi T."/>
            <person name="Furuya T."/>
            <person name="Kikkawa E."/>
            <person name="Omura Y."/>
            <person name="Abe K."/>
            <person name="Kamihara K."/>
            <person name="Katsuta N."/>
            <person name="Sato K."/>
            <person name="Tanikawa M."/>
            <person name="Yamazaki M."/>
            <person name="Ninomiya K."/>
            <person name="Ishibashi T."/>
            <person name="Yamashita H."/>
            <person name="Murakawa K."/>
            <person name="Fujimori K."/>
            <person name="Tanai H."/>
            <person name="Kimata M."/>
            <person name="Watanabe M."/>
            <person name="Hiraoka S."/>
            <person name="Chiba Y."/>
            <person name="Ishida S."/>
            <person name="Ono Y."/>
            <person name="Takiguchi S."/>
            <person name="Watanabe S."/>
            <person name="Yosida M."/>
            <person name="Hotuta T."/>
            <person name="Kusano J."/>
            <person name="Kanehori K."/>
            <person name="Takahashi-Fujii A."/>
            <person name="Hara H."/>
            <person name="Tanase T.-O."/>
            <person name="Nomura Y."/>
            <person name="Togiya S."/>
            <person name="Komai F."/>
            <person name="Hara R."/>
            <person name="Takeuchi K."/>
            <person name="Arita M."/>
            <person name="Imose N."/>
            <person name="Musashino K."/>
            <person name="Yuuki H."/>
            <person name="Oshima A."/>
            <person name="Sasaki N."/>
            <person name="Aotsuka S."/>
            <person name="Yoshikawa Y."/>
            <person name="Matsunawa H."/>
            <person name="Ichihara T."/>
            <person name="Shiohata N."/>
            <person name="Sano S."/>
            <person name="Moriya S."/>
            <person name="Momiyama H."/>
            <person name="Satoh N."/>
            <person name="Takami S."/>
            <person name="Terashima Y."/>
            <person name="Suzuki O."/>
            <person name="Nakagawa S."/>
            <person name="Senoh A."/>
            <person name="Mizoguchi H."/>
            <person name="Goto Y."/>
            <person name="Shimizu F."/>
            <person name="Wakebe H."/>
            <person name="Hishigaki H."/>
            <person name="Watanabe T."/>
            <person name="Sugiyama A."/>
            <person name="Takemoto M."/>
            <person name="Kawakami B."/>
            <person name="Yamazaki M."/>
            <person name="Watanabe K."/>
            <person name="Kumagai A."/>
            <person name="Itakura S."/>
            <person name="Fukuzumi Y."/>
            <person name="Fujimori Y."/>
            <person name="Komiyama M."/>
            <person name="Tashiro H."/>
            <person name="Tanigami A."/>
            <person name="Fujiwara T."/>
            <person name="Ono T."/>
            <person name="Yamada K."/>
            <person name="Fujii Y."/>
            <person name="Ozaki K."/>
            <person name="Hirao M."/>
            <person name="Ohmori Y."/>
            <person name="Kawabata A."/>
            <person name="Hikiji T."/>
            <person name="Kobatake N."/>
            <person name="Inagaki H."/>
            <person name="Ikema Y."/>
            <person name="Okamoto S."/>
            <person name="Okitani R."/>
            <person name="Kawakami T."/>
            <person name="Noguchi S."/>
            <person name="Itoh T."/>
            <person name="Shigeta K."/>
            <person name="Senba T."/>
            <person name="Matsumura K."/>
            <person name="Nakajima Y."/>
            <person name="Mizuno T."/>
            <person name="Morinaga M."/>
            <person name="Sasaki M."/>
            <person name="Togashi T."/>
            <person name="Oyama M."/>
            <person name="Hata H."/>
            <person name="Watanabe M."/>
            <person name="Komatsu T."/>
            <person name="Mizushima-Sugano J."/>
            <person name="Satoh T."/>
            <person name="Shirai Y."/>
            <person name="Takahashi Y."/>
            <person name="Nakagawa K."/>
            <person name="Okumura K."/>
            <person name="Nagase T."/>
            <person name="Nomura N."/>
            <person name="Kikuchi H."/>
            <person name="Masuho Y."/>
            <person name="Yamashita R."/>
            <person name="Nakai K."/>
            <person name="Yada T."/>
            <person name="Nakamura Y."/>
            <person name="Ohara O."/>
            <person name="Isogai T."/>
            <person name="Sugano S."/>
        </authorList>
    </citation>
    <scope>NUCLEOTIDE SEQUENCE [LARGE SCALE MRNA] (ISOFORM 1)</scope>
</reference>
<reference key="6">
    <citation type="journal article" date="1999" name="Nature">
        <title>The DNA sequence of human chromosome 22.</title>
        <authorList>
            <person name="Dunham I."/>
            <person name="Hunt A.R."/>
            <person name="Collins J.E."/>
            <person name="Bruskiewich R."/>
            <person name="Beare D.M."/>
            <person name="Clamp M."/>
            <person name="Smink L.J."/>
            <person name="Ainscough R."/>
            <person name="Almeida J.P."/>
            <person name="Babbage A.K."/>
            <person name="Bagguley C."/>
            <person name="Bailey J."/>
            <person name="Barlow K.F."/>
            <person name="Bates K.N."/>
            <person name="Beasley O.P."/>
            <person name="Bird C.P."/>
            <person name="Blakey S.E."/>
            <person name="Bridgeman A.M."/>
            <person name="Buck D."/>
            <person name="Burgess J."/>
            <person name="Burrill W.D."/>
            <person name="Burton J."/>
            <person name="Carder C."/>
            <person name="Carter N.P."/>
            <person name="Chen Y."/>
            <person name="Clark G."/>
            <person name="Clegg S.M."/>
            <person name="Cobley V.E."/>
            <person name="Cole C.G."/>
            <person name="Collier R.E."/>
            <person name="Connor R."/>
            <person name="Conroy D."/>
            <person name="Corby N.R."/>
            <person name="Coville G.J."/>
            <person name="Cox A.V."/>
            <person name="Davis J."/>
            <person name="Dawson E."/>
            <person name="Dhami P.D."/>
            <person name="Dockree C."/>
            <person name="Dodsworth S.J."/>
            <person name="Durbin R.M."/>
            <person name="Ellington A.G."/>
            <person name="Evans K.L."/>
            <person name="Fey J.M."/>
            <person name="Fleming K."/>
            <person name="French L."/>
            <person name="Garner A.A."/>
            <person name="Gilbert J.G.R."/>
            <person name="Goward M.E."/>
            <person name="Grafham D.V."/>
            <person name="Griffiths M.N.D."/>
            <person name="Hall C."/>
            <person name="Hall R.E."/>
            <person name="Hall-Tamlyn G."/>
            <person name="Heathcott R.W."/>
            <person name="Ho S."/>
            <person name="Holmes S."/>
            <person name="Hunt S.E."/>
            <person name="Jones M.C."/>
            <person name="Kershaw J."/>
            <person name="Kimberley A.M."/>
            <person name="King A."/>
            <person name="Laird G.K."/>
            <person name="Langford C.F."/>
            <person name="Leversha M.A."/>
            <person name="Lloyd C."/>
            <person name="Lloyd D.M."/>
            <person name="Martyn I.D."/>
            <person name="Mashreghi-Mohammadi M."/>
            <person name="Matthews L.H."/>
            <person name="Mccann O.T."/>
            <person name="Mcclay J."/>
            <person name="Mclaren S."/>
            <person name="McMurray A.A."/>
            <person name="Milne S.A."/>
            <person name="Mortimore B.J."/>
            <person name="Odell C.N."/>
            <person name="Pavitt R."/>
            <person name="Pearce A.V."/>
            <person name="Pearson D."/>
            <person name="Phillimore B.J.C.T."/>
            <person name="Phillips S.H."/>
            <person name="Plumb R.W."/>
            <person name="Ramsay H."/>
            <person name="Ramsey Y."/>
            <person name="Rogers L."/>
            <person name="Ross M.T."/>
            <person name="Scott C.E."/>
            <person name="Sehra H.K."/>
            <person name="Skuce C.D."/>
            <person name="Smalley S."/>
            <person name="Smith M.L."/>
            <person name="Soderlund C."/>
            <person name="Spragon L."/>
            <person name="Steward C.A."/>
            <person name="Sulston J.E."/>
            <person name="Swann R.M."/>
            <person name="Vaudin M."/>
            <person name="Wall M."/>
            <person name="Wallis J.M."/>
            <person name="Whiteley M.N."/>
            <person name="Willey D.L."/>
            <person name="Williams L."/>
            <person name="Williams S.A."/>
            <person name="Williamson H."/>
            <person name="Wilmer T.E."/>
            <person name="Wilming L."/>
            <person name="Wright C.L."/>
            <person name="Hubbard T."/>
            <person name="Bentley D.R."/>
            <person name="Beck S."/>
            <person name="Rogers J."/>
            <person name="Shimizu N."/>
            <person name="Minoshima S."/>
            <person name="Kawasaki K."/>
            <person name="Sasaki T."/>
            <person name="Asakawa S."/>
            <person name="Kudoh J."/>
            <person name="Shintani A."/>
            <person name="Shibuya K."/>
            <person name="Yoshizaki Y."/>
            <person name="Aoki N."/>
            <person name="Mitsuyama S."/>
            <person name="Roe B.A."/>
            <person name="Chen F."/>
            <person name="Chu L."/>
            <person name="Crabtree J."/>
            <person name="Deschamps S."/>
            <person name="Do A."/>
            <person name="Do T."/>
            <person name="Dorman A."/>
            <person name="Fang F."/>
            <person name="Fu Y."/>
            <person name="Hu P."/>
            <person name="Hua A."/>
            <person name="Kenton S."/>
            <person name="Lai H."/>
            <person name="Lao H.I."/>
            <person name="Lewis J."/>
            <person name="Lewis S."/>
            <person name="Lin S.-P."/>
            <person name="Loh P."/>
            <person name="Malaj E."/>
            <person name="Nguyen T."/>
            <person name="Pan H."/>
            <person name="Phan S."/>
            <person name="Qi S."/>
            <person name="Qian Y."/>
            <person name="Ray L."/>
            <person name="Ren Q."/>
            <person name="Shaull S."/>
            <person name="Sloan D."/>
            <person name="Song L."/>
            <person name="Wang Q."/>
            <person name="Wang Y."/>
            <person name="Wang Z."/>
            <person name="White J."/>
            <person name="Willingham D."/>
            <person name="Wu H."/>
            <person name="Yao Z."/>
            <person name="Zhan M."/>
            <person name="Zhang G."/>
            <person name="Chissoe S."/>
            <person name="Murray J."/>
            <person name="Miller N."/>
            <person name="Minx P."/>
            <person name="Fulton R."/>
            <person name="Johnson D."/>
            <person name="Bemis G."/>
            <person name="Bentley D."/>
            <person name="Bradshaw H."/>
            <person name="Bourne S."/>
            <person name="Cordes M."/>
            <person name="Du Z."/>
            <person name="Fulton L."/>
            <person name="Goela D."/>
            <person name="Graves T."/>
            <person name="Hawkins J."/>
            <person name="Hinds K."/>
            <person name="Kemp K."/>
            <person name="Latreille P."/>
            <person name="Layman D."/>
            <person name="Ozersky P."/>
            <person name="Rohlfing T."/>
            <person name="Scheet P."/>
            <person name="Walker C."/>
            <person name="Wamsley A."/>
            <person name="Wohldmann P."/>
            <person name="Pepin K."/>
            <person name="Nelson J."/>
            <person name="Korf I."/>
            <person name="Bedell J.A."/>
            <person name="Hillier L.W."/>
            <person name="Mardis E."/>
            <person name="Waterston R."/>
            <person name="Wilson R."/>
            <person name="Emanuel B.S."/>
            <person name="Shaikh T."/>
            <person name="Kurahashi H."/>
            <person name="Saitta S."/>
            <person name="Budarf M.L."/>
            <person name="McDermid H.E."/>
            <person name="Johnson A."/>
            <person name="Wong A.C.C."/>
            <person name="Morrow B.E."/>
            <person name="Edelmann L."/>
            <person name="Kim U.J."/>
            <person name="Shizuya H."/>
            <person name="Simon M.I."/>
            <person name="Dumanski J.P."/>
            <person name="Peyrard M."/>
            <person name="Kedra D."/>
            <person name="Seroussi E."/>
            <person name="Fransson I."/>
            <person name="Tapia I."/>
            <person name="Bruder C.E."/>
            <person name="O'Brien K.P."/>
            <person name="Wilkinson P."/>
            <person name="Bodenteich A."/>
            <person name="Hartman K."/>
            <person name="Hu X."/>
            <person name="Khan A.S."/>
            <person name="Lane L."/>
            <person name="Tilahun Y."/>
            <person name="Wright H."/>
        </authorList>
    </citation>
    <scope>NUCLEOTIDE SEQUENCE [LARGE SCALE GENOMIC DNA]</scope>
</reference>
<reference key="7">
    <citation type="submission" date="2005-07" db="EMBL/GenBank/DDBJ databases">
        <authorList>
            <person name="Mural R.J."/>
            <person name="Istrail S."/>
            <person name="Sutton G.G."/>
            <person name="Florea L."/>
            <person name="Halpern A.L."/>
            <person name="Mobarry C.M."/>
            <person name="Lippert R."/>
            <person name="Walenz B."/>
            <person name="Shatkay H."/>
            <person name="Dew I."/>
            <person name="Miller J.R."/>
            <person name="Flanigan M.J."/>
            <person name="Edwards N.J."/>
            <person name="Bolanos R."/>
            <person name="Fasulo D."/>
            <person name="Halldorsson B.V."/>
            <person name="Hannenhalli S."/>
            <person name="Turner R."/>
            <person name="Yooseph S."/>
            <person name="Lu F."/>
            <person name="Nusskern D.R."/>
            <person name="Shue B.C."/>
            <person name="Zheng X.H."/>
            <person name="Zhong F."/>
            <person name="Delcher A.L."/>
            <person name="Huson D.H."/>
            <person name="Kravitz S.A."/>
            <person name="Mouchard L."/>
            <person name="Reinert K."/>
            <person name="Remington K.A."/>
            <person name="Clark A.G."/>
            <person name="Waterman M.S."/>
            <person name="Eichler E.E."/>
            <person name="Adams M.D."/>
            <person name="Hunkapiller M.W."/>
            <person name="Myers E.W."/>
            <person name="Venter J.C."/>
        </authorList>
    </citation>
    <scope>NUCLEOTIDE SEQUENCE [LARGE SCALE GENOMIC DNA]</scope>
</reference>
<reference key="8">
    <citation type="journal article" date="2004" name="Genome Res.">
        <title>The status, quality, and expansion of the NIH full-length cDNA project: the Mammalian Gene Collection (MGC).</title>
        <authorList>
            <consortium name="The MGC Project Team"/>
        </authorList>
    </citation>
    <scope>NUCLEOTIDE SEQUENCE [LARGE SCALE MRNA] (ISOFORM 1)</scope>
    <source>
        <tissue>Colon</tissue>
    </source>
</reference>
<reference key="9">
    <citation type="journal article" date="1988" name="Proc. Natl. Acad. Sci. U.S.A.">
        <title>Molecular cloning and expression of the human homologue of the murine gene encoding myeloid leukemia-inhibitory factor.</title>
        <authorList>
            <person name="Gough N.M."/>
            <person name="Gearing D.P."/>
            <person name="King J.A."/>
            <person name="Willson T.A."/>
            <person name="Hilton D.J."/>
            <person name="Nicola N.A."/>
            <person name="Metcalf D."/>
        </authorList>
    </citation>
    <scope>NUCLEOTIDE SEQUENCE [GENOMIC DNA] OF 8-202</scope>
</reference>
<reference key="10">
    <citation type="journal article" date="1989" name="Biochem. Biophys. Res. Commun.">
        <title>Purification of a lipoprotein lipase-inhibiting protein produced by a melanoma cell line associated with cancer cachexia.</title>
        <authorList>
            <person name="Mori M."/>
            <person name="Yamaguchi K."/>
            <person name="Abe K."/>
        </authorList>
    </citation>
    <scope>PROTEIN SEQUENCE OF 23-39</scope>
</reference>
<reference key="11">
    <citation type="journal article" date="1993" name="Arch. Biochem. Biophys.">
        <title>Glycosylation pattern and disulfide assignments of recombinant human differentiation-stimulating factor.</title>
        <authorList>
            <person name="Schmelzer C.H."/>
            <person name="Harris R.J."/>
            <person name="Butler D."/>
            <person name="Yedinak C.M."/>
            <person name="Wagner K.L."/>
            <person name="Burton L.E."/>
        </authorList>
    </citation>
    <scope>DISULFIDE BONDS</scope>
    <scope>GLYCOSYLATION AT ASN-31; ASN-56; ASN-85; ASN-95; ASN-118 AND ASN-138</scope>
</reference>
<reference key="12">
    <citation type="journal article" date="2003" name="Mol. Cell">
        <title>Convergent mechanisms for recognition of divergent cytokines by the shared signaling receptor gp130.</title>
        <authorList>
            <person name="Boulanger M.J."/>
            <person name="Bankovich A.J."/>
            <person name="Kortemme T."/>
            <person name="Baker D."/>
            <person name="Garcia K.C."/>
        </authorList>
    </citation>
    <scope>X-RAY CRYSTALLOGRAPHY (2.5 ANGSTROMS) OF 34-202 IN COMPLEX WITH IL6ST</scope>
</reference>
<reference key="13">
    <citation type="journal article" date="2007" name="Proc. Natl. Acad. Sci. U.S.A.">
        <title>An unusual cytokine:Ig-domain interaction revealed in the crystal structure of leukemia inhibitory factor (LIF) in complex with the LIF receptor.</title>
        <authorList>
            <person name="Huyton T."/>
            <person name="Zhang J.G."/>
            <person name="Luo C.S."/>
            <person name="Lou M.Z."/>
            <person name="Hilton D.J."/>
            <person name="Nicola N.A."/>
            <person name="Garrett T.P."/>
        </authorList>
    </citation>
    <scope>X-RAY CRYSTALLOGRAPHY (4.0 ANGSTROMS) OF 23-202 IN COMPLEX WITH MOUSE LIFR</scope>
</reference>
<accession>P15018</accession>
<accession>B2RCW7</accession>
<accession>B5MC23</accession>
<accession>Q52LZ2</accession>
<feature type="signal peptide" evidence="1">
    <location>
        <begin position="1"/>
        <end position="22"/>
    </location>
</feature>
<feature type="chain" id="PRO_0000017715" description="Leukemia inhibitory factor">
    <location>
        <begin position="23"/>
        <end position="202"/>
    </location>
</feature>
<feature type="glycosylation site" description="N-linked (GlcNAc...) asparagine" evidence="2">
    <location>
        <position position="31"/>
    </location>
</feature>
<feature type="glycosylation site" description="N-linked (GlcNAc...) asparagine" evidence="2">
    <location>
        <position position="56"/>
    </location>
</feature>
<feature type="glycosylation site" description="N-linked (GlcNAc...) asparagine" evidence="2">
    <location>
        <position position="85"/>
    </location>
</feature>
<feature type="glycosylation site" description="N-linked (GlcNAc...) asparagine" evidence="2">
    <location>
        <position position="95"/>
    </location>
</feature>
<feature type="glycosylation site" description="N-linked (GlcNAc...) asparagine" evidence="2">
    <location>
        <position position="118"/>
    </location>
</feature>
<feature type="glycosylation site" description="N-linked (GlcNAc...) asparagine" evidence="2">
    <location>
        <position position="138"/>
    </location>
</feature>
<feature type="disulfide bond" evidence="2">
    <location>
        <begin position="34"/>
        <end position="156"/>
    </location>
</feature>
<feature type="disulfide bond" evidence="2">
    <location>
        <begin position="40"/>
        <end position="153"/>
    </location>
</feature>
<feature type="disulfide bond" evidence="2">
    <location>
        <begin position="82"/>
        <end position="185"/>
    </location>
</feature>
<feature type="splice variant" id="VSP_045551" description="In isoform 2." evidence="3">
    <original>GVVPLLLVLHWKHGAGSPLPITPVNATCAIRHPCHNNLMNQIRSQLAQLNGSANALFILYYTAQGEPFPNNLDKLCGPNVTD</original>
    <variation>VHSPGGAVPQQPGQAMWPQRDGLPALPRQRHGEGQAGGAVPHSRVPWHLPGQHHPGPEDPQPQCPQPPQQAQRHRRHPARPP</variation>
    <location>
        <begin position="7"/>
        <end position="88"/>
    </location>
</feature>
<feature type="splice variant" id="VSP_045552" description="In isoform 2." evidence="3">
    <location>
        <begin position="89"/>
        <end position="202"/>
    </location>
</feature>
<feature type="helix" evidence="6">
    <location>
        <begin position="44"/>
        <end position="70"/>
    </location>
</feature>
<feature type="turn" evidence="6">
    <location>
        <begin position="72"/>
        <end position="77"/>
    </location>
</feature>
<feature type="helix" evidence="6">
    <location>
        <begin position="78"/>
        <end position="81"/>
    </location>
</feature>
<feature type="strand" evidence="5">
    <location>
        <begin position="82"/>
        <end position="84"/>
    </location>
</feature>
<feature type="strand" evidence="7">
    <location>
        <begin position="94"/>
        <end position="96"/>
    </location>
</feature>
<feature type="helix" evidence="6">
    <location>
        <begin position="98"/>
        <end position="126"/>
    </location>
</feature>
<feature type="helix" evidence="6">
    <location>
        <begin position="131"/>
        <end position="157"/>
    </location>
</feature>
<feature type="strand" evidence="7">
    <location>
        <begin position="173"/>
        <end position="175"/>
    </location>
</feature>
<feature type="helix" evidence="6">
    <location>
        <begin position="177"/>
        <end position="199"/>
    </location>
</feature>
<protein>
    <recommendedName>
        <fullName>Leukemia inhibitory factor</fullName>
        <shortName>LIF</shortName>
    </recommendedName>
    <alternativeName>
        <fullName>Differentiation-stimulating factor</fullName>
        <shortName>D factor</shortName>
    </alternativeName>
    <alternativeName>
        <fullName>Melanoma-derived LPL inhibitor</fullName>
        <shortName>MLPLI</shortName>
    </alternativeName>
    <innName>Emfilermin</innName>
</protein>
<organism>
    <name type="scientific">Homo sapiens</name>
    <name type="common">Human</name>
    <dbReference type="NCBI Taxonomy" id="9606"/>
    <lineage>
        <taxon>Eukaryota</taxon>
        <taxon>Metazoa</taxon>
        <taxon>Chordata</taxon>
        <taxon>Craniata</taxon>
        <taxon>Vertebrata</taxon>
        <taxon>Euteleostomi</taxon>
        <taxon>Mammalia</taxon>
        <taxon>Eutheria</taxon>
        <taxon>Euarchontoglires</taxon>
        <taxon>Primates</taxon>
        <taxon>Haplorrhini</taxon>
        <taxon>Catarrhini</taxon>
        <taxon>Hominidae</taxon>
        <taxon>Homo</taxon>
    </lineage>
</organism>